<proteinExistence type="inferred from homology"/>
<protein>
    <recommendedName>
        <fullName evidence="1">SsrA-binding protein</fullName>
    </recommendedName>
    <alternativeName>
        <fullName evidence="1">Small protein B</fullName>
    </alternativeName>
</protein>
<sequence length="155" mass="17887">MPKGTGKVIAQNKKAFHDYFIEETYEAGLVLQGTEIKSIRAGRVNLKDAFARVHNGEVWVHNMHINTYEQGNRFNHDPLRTRKLLLHKKEIDKLAGAAKETGYALVPLRIYLKNGFAKMALGLAKGKKQYDKRHDLKEKEAKREIARAFRDRQKM</sequence>
<reference key="1">
    <citation type="submission" date="2008-10" db="EMBL/GenBank/DDBJ databases">
        <title>Genome sequence of Bacillus cereus B4264.</title>
        <authorList>
            <person name="Dodson R.J."/>
            <person name="Durkin A.S."/>
            <person name="Rosovitz M.J."/>
            <person name="Rasko D.A."/>
            <person name="Hoffmaster A."/>
            <person name="Ravel J."/>
            <person name="Sutton G."/>
        </authorList>
    </citation>
    <scope>NUCLEOTIDE SEQUENCE [LARGE SCALE GENOMIC DNA]</scope>
    <source>
        <strain>B4264</strain>
    </source>
</reference>
<gene>
    <name evidence="1" type="primary">smpB</name>
    <name type="ordered locus">BCB4264_A5242</name>
</gene>
<feature type="chain" id="PRO_1000116414" description="SsrA-binding protein">
    <location>
        <begin position="1"/>
        <end position="155"/>
    </location>
</feature>
<accession>B7HEC5</accession>
<name>SSRP_BACC4</name>
<organism>
    <name type="scientific">Bacillus cereus (strain B4264)</name>
    <dbReference type="NCBI Taxonomy" id="405532"/>
    <lineage>
        <taxon>Bacteria</taxon>
        <taxon>Bacillati</taxon>
        <taxon>Bacillota</taxon>
        <taxon>Bacilli</taxon>
        <taxon>Bacillales</taxon>
        <taxon>Bacillaceae</taxon>
        <taxon>Bacillus</taxon>
        <taxon>Bacillus cereus group</taxon>
    </lineage>
</organism>
<comment type="function">
    <text evidence="1">Required for rescue of stalled ribosomes mediated by trans-translation. Binds to transfer-messenger RNA (tmRNA), required for stable association of tmRNA with ribosomes. tmRNA and SmpB together mimic tRNA shape, replacing the anticodon stem-loop with SmpB. tmRNA is encoded by the ssrA gene; the 2 termini fold to resemble tRNA(Ala) and it encodes a 'tag peptide', a short internal open reading frame. During trans-translation Ala-aminoacylated tmRNA acts like a tRNA, entering the A-site of stalled ribosomes, displacing the stalled mRNA. The ribosome then switches to translate the ORF on the tmRNA; the nascent peptide is terminated with the 'tag peptide' encoded by the tmRNA and targeted for degradation. The ribosome is freed to recommence translation, which seems to be the essential function of trans-translation.</text>
</comment>
<comment type="subcellular location">
    <subcellularLocation>
        <location evidence="1">Cytoplasm</location>
    </subcellularLocation>
    <text evidence="1">The tmRNA-SmpB complex associates with stalled 70S ribosomes.</text>
</comment>
<comment type="similarity">
    <text evidence="1">Belongs to the SmpB family.</text>
</comment>
<evidence type="ECO:0000255" key="1">
    <source>
        <dbReference type="HAMAP-Rule" id="MF_00023"/>
    </source>
</evidence>
<keyword id="KW-0963">Cytoplasm</keyword>
<keyword id="KW-0694">RNA-binding</keyword>
<dbReference type="EMBL" id="CP001176">
    <property type="protein sequence ID" value="ACK63501.1"/>
    <property type="molecule type" value="Genomic_DNA"/>
</dbReference>
<dbReference type="RefSeq" id="WP_001123919.1">
    <property type="nucleotide sequence ID" value="NZ_VEHB01000004.1"/>
</dbReference>
<dbReference type="SMR" id="B7HEC5"/>
<dbReference type="KEGG" id="bcb:BCB4264_A5242"/>
<dbReference type="HOGENOM" id="CLU_108953_0_0_9"/>
<dbReference type="Proteomes" id="UP000007096">
    <property type="component" value="Chromosome"/>
</dbReference>
<dbReference type="GO" id="GO:0005829">
    <property type="term" value="C:cytosol"/>
    <property type="evidence" value="ECO:0007669"/>
    <property type="project" value="TreeGrafter"/>
</dbReference>
<dbReference type="GO" id="GO:0003723">
    <property type="term" value="F:RNA binding"/>
    <property type="evidence" value="ECO:0007669"/>
    <property type="project" value="UniProtKB-UniRule"/>
</dbReference>
<dbReference type="GO" id="GO:0070929">
    <property type="term" value="P:trans-translation"/>
    <property type="evidence" value="ECO:0007669"/>
    <property type="project" value="UniProtKB-UniRule"/>
</dbReference>
<dbReference type="CDD" id="cd09294">
    <property type="entry name" value="SmpB"/>
    <property type="match status" value="1"/>
</dbReference>
<dbReference type="Gene3D" id="2.40.280.10">
    <property type="match status" value="1"/>
</dbReference>
<dbReference type="HAMAP" id="MF_00023">
    <property type="entry name" value="SmpB"/>
    <property type="match status" value="1"/>
</dbReference>
<dbReference type="InterPro" id="IPR023620">
    <property type="entry name" value="SmpB"/>
</dbReference>
<dbReference type="InterPro" id="IPR000037">
    <property type="entry name" value="SsrA-bd_prot"/>
</dbReference>
<dbReference type="InterPro" id="IPR020081">
    <property type="entry name" value="SsrA-bd_prot_CS"/>
</dbReference>
<dbReference type="NCBIfam" id="NF003843">
    <property type="entry name" value="PRK05422.1"/>
    <property type="match status" value="1"/>
</dbReference>
<dbReference type="NCBIfam" id="TIGR00086">
    <property type="entry name" value="smpB"/>
    <property type="match status" value="1"/>
</dbReference>
<dbReference type="PANTHER" id="PTHR30308:SF2">
    <property type="entry name" value="SSRA-BINDING PROTEIN"/>
    <property type="match status" value="1"/>
</dbReference>
<dbReference type="PANTHER" id="PTHR30308">
    <property type="entry name" value="TMRNA-BINDING COMPONENT OF TRANS-TRANSLATION TAGGING COMPLEX"/>
    <property type="match status" value="1"/>
</dbReference>
<dbReference type="Pfam" id="PF01668">
    <property type="entry name" value="SmpB"/>
    <property type="match status" value="1"/>
</dbReference>
<dbReference type="SUPFAM" id="SSF74982">
    <property type="entry name" value="Small protein B (SmpB)"/>
    <property type="match status" value="1"/>
</dbReference>
<dbReference type="PROSITE" id="PS01317">
    <property type="entry name" value="SSRP"/>
    <property type="match status" value="1"/>
</dbReference>